<reference evidence="3" key="1">
    <citation type="journal article" date="1994" name="J. Biol. Chem.">
        <title>Biodiversity of apidaecin-type peptide antibiotics. Prospects of manipulating the antibacterial spectrum and combating acquired resistance.</title>
        <authorList>
            <person name="Casteels P."/>
            <person name="Romagnolo J."/>
            <person name="Castle M."/>
            <person name="Casteels-Josson K."/>
            <person name="Erdjument-Bromage H."/>
            <person name="Tempst P."/>
        </authorList>
    </citation>
    <scope>PROTEIN SEQUENCE</scope>
    <scope>FUNCTION</scope>
    <scope>SUBCELLULAR LOCATION</scope>
    <scope>INDUCTION</scope>
    <scope>MASS SPECTROMETRY</scope>
    <source>
        <tissue evidence="2">Hemolymph</tissue>
    </source>
</reference>
<feature type="peptide" id="PRO_0000441346" description="Apidaecin A" evidence="1">
    <location>
        <begin position="1"/>
        <end position="17"/>
    </location>
</feature>
<dbReference type="GO" id="GO:0005615">
    <property type="term" value="C:extracellular space"/>
    <property type="evidence" value="ECO:0000314"/>
    <property type="project" value="UniProtKB"/>
</dbReference>
<dbReference type="GO" id="GO:0050829">
    <property type="term" value="P:defense response to Gram-negative bacterium"/>
    <property type="evidence" value="ECO:0000314"/>
    <property type="project" value="UniProtKB"/>
</dbReference>
<dbReference type="GO" id="GO:0045087">
    <property type="term" value="P:innate immune response"/>
    <property type="evidence" value="ECO:0007669"/>
    <property type="project" value="UniProtKB-KW"/>
</dbReference>
<dbReference type="InterPro" id="IPR004828">
    <property type="entry name" value="Apidaecin"/>
</dbReference>
<dbReference type="Pfam" id="PF00807">
    <property type="entry name" value="Apidaecin"/>
    <property type="match status" value="1"/>
</dbReference>
<evidence type="ECO:0000269" key="1">
    <source>
    </source>
</evidence>
<evidence type="ECO:0000303" key="2">
    <source>
    </source>
</evidence>
<evidence type="ECO:0000305" key="3"/>
<sequence length="17" mass="1965">NRPTYVPAPPRPPHPRL</sequence>
<accession>C0HKX6</accession>
<organism evidence="2">
    <name type="scientific">Sphecius speciosus</name>
    <name type="common">Eastern cicada killer</name>
    <dbReference type="NCBI Taxonomy" id="7487"/>
    <lineage>
        <taxon>Eukaryota</taxon>
        <taxon>Metazoa</taxon>
        <taxon>Ecdysozoa</taxon>
        <taxon>Arthropoda</taxon>
        <taxon>Hexapoda</taxon>
        <taxon>Insecta</taxon>
        <taxon>Pterygota</taxon>
        <taxon>Neoptera</taxon>
        <taxon>Endopterygota</taxon>
        <taxon>Hymenoptera</taxon>
        <taxon>Apocrita</taxon>
        <taxon>Aculeata</taxon>
        <taxon>Apoidea</taxon>
        <taxon>Crabronidae</taxon>
        <taxon>Bembicinae</taxon>
        <taxon>Bembicini</taxon>
        <taxon>Handlirschiina</taxon>
        <taxon>Sphecius</taxon>
    </lineage>
</organism>
<proteinExistence type="evidence at protein level"/>
<name>APDA_SPHSE</name>
<comment type="function">
    <text evidence="1">Antimicrobial peptide active against many Gram-negative enterobacterial and plant-associated bacterial species. Not active against other bacterial species like H.pylori, P.mirabilis, B.pertussis or N.gonorrhoeae.</text>
</comment>
<comment type="subcellular location">
    <subcellularLocation>
        <location evidence="1">Secreted</location>
    </subcellularLocation>
</comment>
<comment type="induction">
    <text evidence="1">By bacterial infection.</text>
</comment>
<comment type="mass spectrometry" mass="1868.2" method="MALDI" evidence="1"/>
<comment type="similarity">
    <text evidence="3">Belongs to the apidaecin family.</text>
</comment>
<protein>
    <recommendedName>
        <fullName evidence="2">Apidaecin A</fullName>
    </recommendedName>
</protein>
<keyword id="KW-0044">Antibiotic</keyword>
<keyword id="KW-0929">Antimicrobial</keyword>
<keyword id="KW-0903">Direct protein sequencing</keyword>
<keyword id="KW-0391">Immunity</keyword>
<keyword id="KW-0399">Innate immunity</keyword>
<keyword id="KW-0964">Secreted</keyword>